<evidence type="ECO:0000303" key="1">
    <source>
    </source>
</evidence>
<evidence type="ECO:0000305" key="2"/>
<name>PHAF1_ARATH</name>
<protein>
    <recommendedName>
        <fullName>PHAF1 protein At3g51130</fullName>
    </recommendedName>
</protein>
<feature type="chain" id="PRO_0000221088" description="PHAF1 protein At3g51130">
    <location>
        <begin position="1"/>
        <end position="410"/>
    </location>
</feature>
<feature type="splice variant" id="VSP_025789" description="In isoform 2." evidence="1">
    <original>KNGHIATITLFQS</original>
    <variation>HFCNNPRFSNFDPCYILADC</variation>
    <location>
        <begin position="398"/>
        <end position="410"/>
    </location>
</feature>
<reference key="1">
    <citation type="journal article" date="2000" name="Nature">
        <title>Sequence and analysis of chromosome 3 of the plant Arabidopsis thaliana.</title>
        <authorList>
            <person name="Salanoubat M."/>
            <person name="Lemcke K."/>
            <person name="Rieger M."/>
            <person name="Ansorge W."/>
            <person name="Unseld M."/>
            <person name="Fartmann B."/>
            <person name="Valle G."/>
            <person name="Bloecker H."/>
            <person name="Perez-Alonso M."/>
            <person name="Obermaier B."/>
            <person name="Delseny M."/>
            <person name="Boutry M."/>
            <person name="Grivell L.A."/>
            <person name="Mache R."/>
            <person name="Puigdomenech P."/>
            <person name="De Simone V."/>
            <person name="Choisne N."/>
            <person name="Artiguenave F."/>
            <person name="Robert C."/>
            <person name="Brottier P."/>
            <person name="Wincker P."/>
            <person name="Cattolico L."/>
            <person name="Weissenbach J."/>
            <person name="Saurin W."/>
            <person name="Quetier F."/>
            <person name="Schaefer M."/>
            <person name="Mueller-Auer S."/>
            <person name="Gabel C."/>
            <person name="Fuchs M."/>
            <person name="Benes V."/>
            <person name="Wurmbach E."/>
            <person name="Drzonek H."/>
            <person name="Erfle H."/>
            <person name="Jordan N."/>
            <person name="Bangert S."/>
            <person name="Wiedelmann R."/>
            <person name="Kranz H."/>
            <person name="Voss H."/>
            <person name="Holland R."/>
            <person name="Brandt P."/>
            <person name="Nyakatura G."/>
            <person name="Vezzi A."/>
            <person name="D'Angelo M."/>
            <person name="Pallavicini A."/>
            <person name="Toppo S."/>
            <person name="Simionati B."/>
            <person name="Conrad A."/>
            <person name="Hornischer K."/>
            <person name="Kauer G."/>
            <person name="Loehnert T.-H."/>
            <person name="Nordsiek G."/>
            <person name="Reichelt J."/>
            <person name="Scharfe M."/>
            <person name="Schoen O."/>
            <person name="Bargues M."/>
            <person name="Terol J."/>
            <person name="Climent J."/>
            <person name="Navarro P."/>
            <person name="Collado C."/>
            <person name="Perez-Perez A."/>
            <person name="Ottenwaelder B."/>
            <person name="Duchemin D."/>
            <person name="Cooke R."/>
            <person name="Laudie M."/>
            <person name="Berger-Llauro C."/>
            <person name="Purnelle B."/>
            <person name="Masuy D."/>
            <person name="de Haan M."/>
            <person name="Maarse A.C."/>
            <person name="Alcaraz J.-P."/>
            <person name="Cottet A."/>
            <person name="Casacuberta E."/>
            <person name="Monfort A."/>
            <person name="Argiriou A."/>
            <person name="Flores M."/>
            <person name="Liguori R."/>
            <person name="Vitale D."/>
            <person name="Mannhaupt G."/>
            <person name="Haase D."/>
            <person name="Schoof H."/>
            <person name="Rudd S."/>
            <person name="Zaccaria P."/>
            <person name="Mewes H.-W."/>
            <person name="Mayer K.F.X."/>
            <person name="Kaul S."/>
            <person name="Town C.D."/>
            <person name="Koo H.L."/>
            <person name="Tallon L.J."/>
            <person name="Jenkins J."/>
            <person name="Rooney T."/>
            <person name="Rizzo M."/>
            <person name="Walts A."/>
            <person name="Utterback T."/>
            <person name="Fujii C.Y."/>
            <person name="Shea T.P."/>
            <person name="Creasy T.H."/>
            <person name="Haas B."/>
            <person name="Maiti R."/>
            <person name="Wu D."/>
            <person name="Peterson J."/>
            <person name="Van Aken S."/>
            <person name="Pai G."/>
            <person name="Militscher J."/>
            <person name="Sellers P."/>
            <person name="Gill J.E."/>
            <person name="Feldblyum T.V."/>
            <person name="Preuss D."/>
            <person name="Lin X."/>
            <person name="Nierman W.C."/>
            <person name="Salzberg S.L."/>
            <person name="White O."/>
            <person name="Venter J.C."/>
            <person name="Fraser C.M."/>
            <person name="Kaneko T."/>
            <person name="Nakamura Y."/>
            <person name="Sato S."/>
            <person name="Kato T."/>
            <person name="Asamizu E."/>
            <person name="Sasamoto S."/>
            <person name="Kimura T."/>
            <person name="Idesawa K."/>
            <person name="Kawashima K."/>
            <person name="Kishida Y."/>
            <person name="Kiyokawa C."/>
            <person name="Kohara M."/>
            <person name="Matsumoto M."/>
            <person name="Matsuno A."/>
            <person name="Muraki A."/>
            <person name="Nakayama S."/>
            <person name="Nakazaki N."/>
            <person name="Shinpo S."/>
            <person name="Takeuchi C."/>
            <person name="Wada T."/>
            <person name="Watanabe A."/>
            <person name="Yamada M."/>
            <person name="Yasuda M."/>
            <person name="Tabata S."/>
        </authorList>
    </citation>
    <scope>NUCLEOTIDE SEQUENCE [LARGE SCALE GENOMIC DNA]</scope>
    <source>
        <strain>cv. Columbia</strain>
    </source>
</reference>
<reference key="2">
    <citation type="journal article" date="2017" name="Plant J.">
        <title>Araport11: a complete reannotation of the Arabidopsis thaliana reference genome.</title>
        <authorList>
            <person name="Cheng C.Y."/>
            <person name="Krishnakumar V."/>
            <person name="Chan A.P."/>
            <person name="Thibaud-Nissen F."/>
            <person name="Schobel S."/>
            <person name="Town C.D."/>
        </authorList>
    </citation>
    <scope>GENOME REANNOTATION</scope>
    <source>
        <strain>cv. Columbia</strain>
    </source>
</reference>
<reference key="3">
    <citation type="journal article" date="2003" name="Science">
        <title>Empirical analysis of transcriptional activity in the Arabidopsis genome.</title>
        <authorList>
            <person name="Yamada K."/>
            <person name="Lim J."/>
            <person name="Dale J.M."/>
            <person name="Chen H."/>
            <person name="Shinn P."/>
            <person name="Palm C.J."/>
            <person name="Southwick A.M."/>
            <person name="Wu H.C."/>
            <person name="Kim C.J."/>
            <person name="Nguyen M."/>
            <person name="Pham P.K."/>
            <person name="Cheuk R.F."/>
            <person name="Karlin-Newmann G."/>
            <person name="Liu S.X."/>
            <person name="Lam B."/>
            <person name="Sakano H."/>
            <person name="Wu T."/>
            <person name="Yu G."/>
            <person name="Miranda M."/>
            <person name="Quach H.L."/>
            <person name="Tripp M."/>
            <person name="Chang C.H."/>
            <person name="Lee J.M."/>
            <person name="Toriumi M.J."/>
            <person name="Chan M.M."/>
            <person name="Tang C.C."/>
            <person name="Onodera C.S."/>
            <person name="Deng J.M."/>
            <person name="Akiyama K."/>
            <person name="Ansari Y."/>
            <person name="Arakawa T."/>
            <person name="Banh J."/>
            <person name="Banno F."/>
            <person name="Bowser L."/>
            <person name="Brooks S.Y."/>
            <person name="Carninci P."/>
            <person name="Chao Q."/>
            <person name="Choy N."/>
            <person name="Enju A."/>
            <person name="Goldsmith A.D."/>
            <person name="Gurjal M."/>
            <person name="Hansen N.F."/>
            <person name="Hayashizaki Y."/>
            <person name="Johnson-Hopson C."/>
            <person name="Hsuan V.W."/>
            <person name="Iida K."/>
            <person name="Karnes M."/>
            <person name="Khan S."/>
            <person name="Koesema E."/>
            <person name="Ishida J."/>
            <person name="Jiang P.X."/>
            <person name="Jones T."/>
            <person name="Kawai J."/>
            <person name="Kamiya A."/>
            <person name="Meyers C."/>
            <person name="Nakajima M."/>
            <person name="Narusaka M."/>
            <person name="Seki M."/>
            <person name="Sakurai T."/>
            <person name="Satou M."/>
            <person name="Tamse R."/>
            <person name="Vaysberg M."/>
            <person name="Wallender E.K."/>
            <person name="Wong C."/>
            <person name="Yamamura Y."/>
            <person name="Yuan S."/>
            <person name="Shinozaki K."/>
            <person name="Davis R.W."/>
            <person name="Theologis A."/>
            <person name="Ecker J.R."/>
        </authorList>
    </citation>
    <scope>NUCLEOTIDE SEQUENCE [LARGE SCALE MRNA] (ISOFORMS 1 AND 2)</scope>
    <source>
        <strain>cv. Columbia</strain>
    </source>
</reference>
<reference key="4">
    <citation type="submission" date="2002-03" db="EMBL/GenBank/DDBJ databases">
        <title>Full-length cDNA from Arabidopsis thaliana.</title>
        <authorList>
            <person name="Brover V.V."/>
            <person name="Troukhan M.E."/>
            <person name="Alexandrov N.A."/>
            <person name="Lu Y.-P."/>
            <person name="Flavell R.B."/>
            <person name="Feldmann K.A."/>
        </authorList>
    </citation>
    <scope>NUCLEOTIDE SEQUENCE [LARGE SCALE MRNA] (ISOFORM 1)</scope>
</reference>
<comment type="interaction">
    <interactant intactId="EBI-25520212">
        <id>Q9SD33</id>
    </interactant>
    <interactant intactId="EBI-4426557">
        <id>Q84MB2</id>
        <label>TIFY8</label>
    </interactant>
    <organismsDiffer>false</organismsDiffer>
    <experiments>3</experiments>
</comment>
<comment type="alternative products">
    <event type="alternative splicing"/>
    <isoform>
        <id>Q9SD33-1</id>
        <name>1</name>
        <sequence type="displayed"/>
    </isoform>
    <isoform>
        <id>Q9SD33-2</id>
        <name>2</name>
        <sequence type="described" ref="VSP_025789"/>
    </isoform>
</comment>
<comment type="similarity">
    <text evidence="2">Belongs to the PHAF1 family.</text>
</comment>
<comment type="sequence caution" evidence="2">
    <conflict type="erroneous termination">
        <sequence resource="EMBL-CDS" id="AAM63377"/>
    </conflict>
    <text>Truncated C-terminus.</text>
</comment>
<keyword id="KW-0025">Alternative splicing</keyword>
<keyword id="KW-1185">Reference proteome</keyword>
<sequence length="410" mass="45682">MKDYSKIGDKLVMQRPRRRLEGTAMGATVFDLRPGVGIGPFSIGMPICEAFAQIEQQPNIYDVVHVKYYDEDPLKLDVVISFPDHGFHLRFDPWSQRLRLVEIFDVKRLQMRYATSMIGGPSTLATFVAVYALFGPTFPGIYDKERGIYSLFYPGLSFEFPIPNQYTDCCHDGEAALPLEFPDGTTPVTCRVSIYDNSSDKKVGVGKLMDRASVPPLPPGSLYMEEVHVKPGKELYFTVGGQHMPFGASPQDVWTELGRPCGIHPKQVDQMVIHSASDPRPKTTICGDYFYNYFTRGLDILFDGETHKVKKFVLHTNYPGHADFNSYIKCNFVISAGADAAEANRSGNKITPSTNWDQVKEILGECGPAAIQTQGSTSNPFGSTYVYGYQNVAFEVMKNGHIATITLFQS</sequence>
<organism>
    <name type="scientific">Arabidopsis thaliana</name>
    <name type="common">Mouse-ear cress</name>
    <dbReference type="NCBI Taxonomy" id="3702"/>
    <lineage>
        <taxon>Eukaryota</taxon>
        <taxon>Viridiplantae</taxon>
        <taxon>Streptophyta</taxon>
        <taxon>Embryophyta</taxon>
        <taxon>Tracheophyta</taxon>
        <taxon>Spermatophyta</taxon>
        <taxon>Magnoliopsida</taxon>
        <taxon>eudicotyledons</taxon>
        <taxon>Gunneridae</taxon>
        <taxon>Pentapetalae</taxon>
        <taxon>rosids</taxon>
        <taxon>malvids</taxon>
        <taxon>Brassicales</taxon>
        <taxon>Brassicaceae</taxon>
        <taxon>Camelineae</taxon>
        <taxon>Arabidopsis</taxon>
    </lineage>
</organism>
<proteinExistence type="evidence at protein level"/>
<accession>Q9SD33</accession>
<accession>Q53YG9</accession>
<accession>Q8LD70</accession>
<accession>Q94C31</accession>
<dbReference type="EMBL" id="AL132980">
    <property type="protein sequence ID" value="CAB62635.1"/>
    <property type="molecule type" value="Genomic_DNA"/>
</dbReference>
<dbReference type="EMBL" id="CP002686">
    <property type="protein sequence ID" value="AEE78754.1"/>
    <property type="molecule type" value="Genomic_DNA"/>
</dbReference>
<dbReference type="EMBL" id="AY037194">
    <property type="protein sequence ID" value="AAK59779.1"/>
    <property type="molecule type" value="mRNA"/>
</dbReference>
<dbReference type="EMBL" id="BT002670">
    <property type="protein sequence ID" value="AAO11586.1"/>
    <property type="molecule type" value="mRNA"/>
</dbReference>
<dbReference type="EMBL" id="AY086173">
    <property type="protein sequence ID" value="AAM63377.1"/>
    <property type="status" value="ALT_SEQ"/>
    <property type="molecule type" value="mRNA"/>
</dbReference>
<dbReference type="PIR" id="T45744">
    <property type="entry name" value="T45744"/>
</dbReference>
<dbReference type="RefSeq" id="NP_566945.1">
    <molecule id="Q9SD33-1"/>
    <property type="nucleotide sequence ID" value="NM_114973.3"/>
</dbReference>
<dbReference type="BioGRID" id="9595">
    <property type="interactions" value="2"/>
</dbReference>
<dbReference type="FunCoup" id="Q9SD33">
    <property type="interactions" value="3134"/>
</dbReference>
<dbReference type="IntAct" id="Q9SD33">
    <property type="interactions" value="1"/>
</dbReference>
<dbReference type="STRING" id="3702.Q9SD33"/>
<dbReference type="PaxDb" id="3702-AT3G51130.1"/>
<dbReference type="ProteomicsDB" id="234641">
    <molecule id="Q9SD33-1"/>
</dbReference>
<dbReference type="EnsemblPlants" id="AT3G51130.1">
    <molecule id="Q9SD33-1"/>
    <property type="protein sequence ID" value="AT3G51130.1"/>
    <property type="gene ID" value="AT3G51130"/>
</dbReference>
<dbReference type="GeneID" id="824277"/>
<dbReference type="Gramene" id="AT3G51130.1">
    <molecule id="Q9SD33-1"/>
    <property type="protein sequence ID" value="AT3G51130.1"/>
    <property type="gene ID" value="AT3G51130"/>
</dbReference>
<dbReference type="KEGG" id="ath:AT3G51130"/>
<dbReference type="Araport" id="AT3G51130"/>
<dbReference type="TAIR" id="AT3G51130"/>
<dbReference type="eggNOG" id="KOG2819">
    <property type="taxonomic scope" value="Eukaryota"/>
</dbReference>
<dbReference type="HOGENOM" id="CLU_032056_0_0_1"/>
<dbReference type="InParanoid" id="Q9SD33"/>
<dbReference type="OMA" id="YRKNDQK"/>
<dbReference type="PhylomeDB" id="Q9SD33"/>
<dbReference type="PRO" id="PR:Q9SD33"/>
<dbReference type="Proteomes" id="UP000006548">
    <property type="component" value="Chromosome 3"/>
</dbReference>
<dbReference type="ExpressionAtlas" id="Q9SD33">
    <property type="expression patterns" value="baseline and differential"/>
</dbReference>
<dbReference type="InterPro" id="IPR005373">
    <property type="entry name" value="PHAF1"/>
</dbReference>
<dbReference type="InterPro" id="IPR039156">
    <property type="entry name" value="PHAF1/BROMI"/>
</dbReference>
<dbReference type="PANTHER" id="PTHR13465:SF2">
    <property type="entry name" value="PHAGOSOME ASSEMBLY FACTOR 1"/>
    <property type="match status" value="1"/>
</dbReference>
<dbReference type="PANTHER" id="PTHR13465">
    <property type="entry name" value="UPF0183 PROTEIN"/>
    <property type="match status" value="1"/>
</dbReference>
<dbReference type="Pfam" id="PF03676">
    <property type="entry name" value="PHAF1"/>
    <property type="match status" value="1"/>
</dbReference>
<gene>
    <name type="ordered locus">At3g51130</name>
    <name type="ORF">F24M12.170</name>
</gene>